<keyword id="KW-0067">ATP-binding</keyword>
<keyword id="KW-0093">Biotin biosynthesis</keyword>
<keyword id="KW-0963">Cytoplasm</keyword>
<keyword id="KW-0436">Ligase</keyword>
<keyword id="KW-0460">Magnesium</keyword>
<keyword id="KW-0479">Metal-binding</keyword>
<keyword id="KW-0547">Nucleotide-binding</keyword>
<protein>
    <recommendedName>
        <fullName evidence="1">ATP-dependent dethiobiotin synthetase BioD</fullName>
        <ecNumber evidence="1">6.3.3.3</ecNumber>
    </recommendedName>
    <alternativeName>
        <fullName evidence="1">DTB synthetase</fullName>
        <shortName evidence="1">DTBS</shortName>
    </alternativeName>
    <alternativeName>
        <fullName evidence="1">Dethiobiotin synthase</fullName>
    </alternativeName>
</protein>
<accession>Q2T1Q3</accession>
<evidence type="ECO:0000255" key="1">
    <source>
        <dbReference type="HAMAP-Rule" id="MF_00336"/>
    </source>
</evidence>
<gene>
    <name evidence="1" type="primary">bioD</name>
    <name type="ordered locus">BTH_I0338</name>
</gene>
<dbReference type="EC" id="6.3.3.3" evidence="1"/>
<dbReference type="EMBL" id="CP000086">
    <property type="protein sequence ID" value="ABC39482.1"/>
    <property type="molecule type" value="Genomic_DNA"/>
</dbReference>
<dbReference type="RefSeq" id="WP_009893288.1">
    <property type="nucleotide sequence ID" value="NC_007651.1"/>
</dbReference>
<dbReference type="SMR" id="Q2T1Q3"/>
<dbReference type="GeneID" id="45120101"/>
<dbReference type="KEGG" id="bte:BTH_I0338"/>
<dbReference type="HOGENOM" id="CLU_072551_0_0_4"/>
<dbReference type="UniPathway" id="UPA00078">
    <property type="reaction ID" value="UER00161"/>
</dbReference>
<dbReference type="Proteomes" id="UP000001930">
    <property type="component" value="Chromosome I"/>
</dbReference>
<dbReference type="GO" id="GO:0005829">
    <property type="term" value="C:cytosol"/>
    <property type="evidence" value="ECO:0007669"/>
    <property type="project" value="TreeGrafter"/>
</dbReference>
<dbReference type="GO" id="GO:0005524">
    <property type="term" value="F:ATP binding"/>
    <property type="evidence" value="ECO:0007669"/>
    <property type="project" value="UniProtKB-UniRule"/>
</dbReference>
<dbReference type="GO" id="GO:0004141">
    <property type="term" value="F:dethiobiotin synthase activity"/>
    <property type="evidence" value="ECO:0007669"/>
    <property type="project" value="UniProtKB-UniRule"/>
</dbReference>
<dbReference type="GO" id="GO:0000287">
    <property type="term" value="F:magnesium ion binding"/>
    <property type="evidence" value="ECO:0007669"/>
    <property type="project" value="UniProtKB-UniRule"/>
</dbReference>
<dbReference type="GO" id="GO:0009102">
    <property type="term" value="P:biotin biosynthetic process"/>
    <property type="evidence" value="ECO:0007669"/>
    <property type="project" value="UniProtKB-UniRule"/>
</dbReference>
<dbReference type="CDD" id="cd03109">
    <property type="entry name" value="DTBS"/>
    <property type="match status" value="1"/>
</dbReference>
<dbReference type="FunFam" id="3.40.50.300:FF:000292">
    <property type="entry name" value="ATP-dependent dethiobiotin synthetase BioD"/>
    <property type="match status" value="1"/>
</dbReference>
<dbReference type="Gene3D" id="3.40.50.300">
    <property type="entry name" value="P-loop containing nucleotide triphosphate hydrolases"/>
    <property type="match status" value="1"/>
</dbReference>
<dbReference type="HAMAP" id="MF_00336">
    <property type="entry name" value="BioD"/>
    <property type="match status" value="1"/>
</dbReference>
<dbReference type="InterPro" id="IPR004472">
    <property type="entry name" value="DTB_synth_BioD"/>
</dbReference>
<dbReference type="InterPro" id="IPR027417">
    <property type="entry name" value="P-loop_NTPase"/>
</dbReference>
<dbReference type="NCBIfam" id="TIGR00347">
    <property type="entry name" value="bioD"/>
    <property type="match status" value="1"/>
</dbReference>
<dbReference type="PANTHER" id="PTHR43210">
    <property type="entry name" value="DETHIOBIOTIN SYNTHETASE"/>
    <property type="match status" value="1"/>
</dbReference>
<dbReference type="PANTHER" id="PTHR43210:SF5">
    <property type="entry name" value="DETHIOBIOTIN SYNTHETASE"/>
    <property type="match status" value="1"/>
</dbReference>
<dbReference type="Pfam" id="PF13500">
    <property type="entry name" value="AAA_26"/>
    <property type="match status" value="1"/>
</dbReference>
<dbReference type="PIRSF" id="PIRSF006755">
    <property type="entry name" value="DTB_synth"/>
    <property type="match status" value="1"/>
</dbReference>
<dbReference type="SUPFAM" id="SSF52540">
    <property type="entry name" value="P-loop containing nucleoside triphosphate hydrolases"/>
    <property type="match status" value="1"/>
</dbReference>
<comment type="function">
    <text evidence="1">Catalyzes a mechanistically unusual reaction, the ATP-dependent insertion of CO2 between the N7 and N8 nitrogen atoms of 7,8-diaminopelargonic acid (DAPA, also called 7,8-diammoniononanoate) to form a ureido ring.</text>
</comment>
<comment type="catalytic activity">
    <reaction evidence="1">
        <text>(7R,8S)-7,8-diammoniononanoate + CO2 + ATP = (4R,5S)-dethiobiotin + ADP + phosphate + 3 H(+)</text>
        <dbReference type="Rhea" id="RHEA:15805"/>
        <dbReference type="ChEBI" id="CHEBI:15378"/>
        <dbReference type="ChEBI" id="CHEBI:16526"/>
        <dbReference type="ChEBI" id="CHEBI:30616"/>
        <dbReference type="ChEBI" id="CHEBI:43474"/>
        <dbReference type="ChEBI" id="CHEBI:149469"/>
        <dbReference type="ChEBI" id="CHEBI:149473"/>
        <dbReference type="ChEBI" id="CHEBI:456216"/>
        <dbReference type="EC" id="6.3.3.3"/>
    </reaction>
</comment>
<comment type="cofactor">
    <cofactor evidence="1">
        <name>Mg(2+)</name>
        <dbReference type="ChEBI" id="CHEBI:18420"/>
    </cofactor>
</comment>
<comment type="pathway">
    <text evidence="1">Cofactor biosynthesis; biotin biosynthesis; biotin from 7,8-diaminononanoate: step 1/2.</text>
</comment>
<comment type="subunit">
    <text evidence="1">Homodimer.</text>
</comment>
<comment type="subcellular location">
    <subcellularLocation>
        <location evidence="1">Cytoplasm</location>
    </subcellularLocation>
</comment>
<comment type="similarity">
    <text evidence="1">Belongs to the dethiobiotin synthetase family.</text>
</comment>
<proteinExistence type="inferred from homology"/>
<sequence>MSAPLSLFVTGTDTEIGKTFVSTALLHGFARAGLRAAAMKPIAAGAYQRDGVWRNEDADQLDAAANVALPATIRTPFLLKAAAAPHIAAAREGVALDIDTIVGAHRRACERADVVVVEGVGGFRVPLAGTRDTADLAVALGLPVVLVVGVRLGCISHALLTADAIAARGLAIAGWVANRVDAAMRFADDNVDTLRAWLEREHGAPLLGDIAHMSPPSPEAASRSLDVNRLLGALRETAPR</sequence>
<organism>
    <name type="scientific">Burkholderia thailandensis (strain ATCC 700388 / DSM 13276 / CCUG 48851 / CIP 106301 / E264)</name>
    <dbReference type="NCBI Taxonomy" id="271848"/>
    <lineage>
        <taxon>Bacteria</taxon>
        <taxon>Pseudomonadati</taxon>
        <taxon>Pseudomonadota</taxon>
        <taxon>Betaproteobacteria</taxon>
        <taxon>Burkholderiales</taxon>
        <taxon>Burkholderiaceae</taxon>
        <taxon>Burkholderia</taxon>
        <taxon>pseudomallei group</taxon>
    </lineage>
</organism>
<reference key="1">
    <citation type="journal article" date="2005" name="BMC Genomics">
        <title>Bacterial genome adaptation to niches: divergence of the potential virulence genes in three Burkholderia species of different survival strategies.</title>
        <authorList>
            <person name="Kim H.S."/>
            <person name="Schell M.A."/>
            <person name="Yu Y."/>
            <person name="Ulrich R.L."/>
            <person name="Sarria S.H."/>
            <person name="Nierman W.C."/>
            <person name="DeShazer D."/>
        </authorList>
    </citation>
    <scope>NUCLEOTIDE SEQUENCE [LARGE SCALE GENOMIC DNA]</scope>
    <source>
        <strain>ATCC 700388 / DSM 13276 / CCUG 48851 / CIP 106301 / E264</strain>
    </source>
</reference>
<name>BIOD_BURTA</name>
<feature type="chain" id="PRO_0000302494" description="ATP-dependent dethiobiotin synthetase BioD">
    <location>
        <begin position="1"/>
        <end position="240"/>
    </location>
</feature>
<feature type="active site" evidence="1">
    <location>
        <position position="40"/>
    </location>
</feature>
<feature type="binding site" evidence="1">
    <location>
        <begin position="15"/>
        <end position="20"/>
    </location>
    <ligand>
        <name>ATP</name>
        <dbReference type="ChEBI" id="CHEBI:30616"/>
    </ligand>
</feature>
<feature type="binding site" evidence="1">
    <location>
        <position position="19"/>
    </location>
    <ligand>
        <name>Mg(2+)</name>
        <dbReference type="ChEBI" id="CHEBI:18420"/>
    </ligand>
</feature>
<feature type="binding site" evidence="1">
    <location>
        <position position="57"/>
    </location>
    <ligand>
        <name>ATP</name>
        <dbReference type="ChEBI" id="CHEBI:30616"/>
    </ligand>
</feature>
<feature type="binding site" evidence="1">
    <location>
        <position position="57"/>
    </location>
    <ligand>
        <name>Mg(2+)</name>
        <dbReference type="ChEBI" id="CHEBI:18420"/>
    </ligand>
</feature>
<feature type="binding site" evidence="1">
    <location>
        <begin position="118"/>
        <end position="121"/>
    </location>
    <ligand>
        <name>ATP</name>
        <dbReference type="ChEBI" id="CHEBI:30616"/>
    </ligand>
</feature>
<feature type="binding site" evidence="1">
    <location>
        <position position="118"/>
    </location>
    <ligand>
        <name>Mg(2+)</name>
        <dbReference type="ChEBI" id="CHEBI:18420"/>
    </ligand>
</feature>
<feature type="binding site" evidence="1">
    <location>
        <begin position="178"/>
        <end position="179"/>
    </location>
    <ligand>
        <name>ATP</name>
        <dbReference type="ChEBI" id="CHEBI:30616"/>
    </ligand>
</feature>